<organism>
    <name type="scientific">Brucella melitensis biotype 1 (strain ATCC 23456 / CCUG 17765 / NCTC 10094 / 16M)</name>
    <dbReference type="NCBI Taxonomy" id="224914"/>
    <lineage>
        <taxon>Bacteria</taxon>
        <taxon>Pseudomonadati</taxon>
        <taxon>Pseudomonadota</taxon>
        <taxon>Alphaproteobacteria</taxon>
        <taxon>Hyphomicrobiales</taxon>
        <taxon>Brucellaceae</taxon>
        <taxon>Brucella/Ochrobactrum group</taxon>
        <taxon>Brucella</taxon>
    </lineage>
</organism>
<gene>
    <name evidence="1" type="primary">recA</name>
    <name type="ordered locus">BMEI0787</name>
</gene>
<proteinExistence type="inferred from homology"/>
<accession>P65975</accession>
<accession>Q8YHL0</accession>
<protein>
    <recommendedName>
        <fullName evidence="1">Protein RecA</fullName>
    </recommendedName>
    <alternativeName>
        <fullName evidence="1">Recombinase A</fullName>
    </alternativeName>
</protein>
<sequence length="361" mass="38735">MSQNSLRLVEDNSVDKTKALDAALSQIERAFGKGSIMRLGQNDQVVEIETVSTGSLSLDIALGVGGLPKGRIVEIYGPESSGKTTLALHTIAEAQKKGGICAFVDAEHALDPVYARKLGVDLENLLISQPDTGEQALEITDTLVRSGAIDVLVVDSVAALTPRAEIEGEMGDSLPGLQARLMSQALRKLTGSISRSNCMVIFINQIRMKIGVMFGSPETTTGGNALKFYASVRLDIRRIGSIKERDEVVGNQTRVKVVKNKLAPPFKQVEFDIMYGAGVSKVGELVDLGVKAGVVEKSGAWFSYNSQRLGQGRENAKQYLKDNPEVAREIETTLRQNAGLIAEQFLDDGGPEEDAAGAAEM</sequence>
<keyword id="KW-0067">ATP-binding</keyword>
<keyword id="KW-0963">Cytoplasm</keyword>
<keyword id="KW-0227">DNA damage</keyword>
<keyword id="KW-0233">DNA recombination</keyword>
<keyword id="KW-0234">DNA repair</keyword>
<keyword id="KW-0238">DNA-binding</keyword>
<keyword id="KW-0547">Nucleotide-binding</keyword>
<keyword id="KW-0742">SOS response</keyword>
<comment type="function">
    <text evidence="1">Can catalyze the hydrolysis of ATP in the presence of single-stranded DNA, the ATP-dependent uptake of single-stranded DNA by duplex DNA, and the ATP-dependent hybridization of homologous single-stranded DNAs. It interacts with LexA causing its activation and leading to its autocatalytic cleavage.</text>
</comment>
<comment type="subcellular location">
    <subcellularLocation>
        <location evidence="1">Cytoplasm</location>
    </subcellularLocation>
</comment>
<comment type="similarity">
    <text evidence="1">Belongs to the RecA family.</text>
</comment>
<comment type="sequence caution" evidence="2">
    <conflict type="erroneous initiation">
        <sequence resource="EMBL-CDS" id="AAL51968"/>
    </conflict>
</comment>
<feature type="chain" id="PRO_0000122671" description="Protein RecA">
    <location>
        <begin position="1"/>
        <end position="361"/>
    </location>
</feature>
<feature type="binding site" evidence="1">
    <location>
        <begin position="77"/>
        <end position="84"/>
    </location>
    <ligand>
        <name>ATP</name>
        <dbReference type="ChEBI" id="CHEBI:30616"/>
    </ligand>
</feature>
<name>RECA_BRUME</name>
<reference key="1">
    <citation type="journal article" date="2002" name="Proc. Natl. Acad. Sci. U.S.A.">
        <title>The genome sequence of the facultative intracellular pathogen Brucella melitensis.</title>
        <authorList>
            <person name="DelVecchio V.G."/>
            <person name="Kapatral V."/>
            <person name="Redkar R.J."/>
            <person name="Patra G."/>
            <person name="Mujer C."/>
            <person name="Los T."/>
            <person name="Ivanova N."/>
            <person name="Anderson I."/>
            <person name="Bhattacharyya A."/>
            <person name="Lykidis A."/>
            <person name="Reznik G."/>
            <person name="Jablonski L."/>
            <person name="Larsen N."/>
            <person name="D'Souza M."/>
            <person name="Bernal A."/>
            <person name="Mazur M."/>
            <person name="Goltsman E."/>
            <person name="Selkov E."/>
            <person name="Elzer P.H."/>
            <person name="Hagius S."/>
            <person name="O'Callaghan D."/>
            <person name="Letesson J.-J."/>
            <person name="Haselkorn R."/>
            <person name="Kyrpides N.C."/>
            <person name="Overbeek R."/>
        </authorList>
    </citation>
    <scope>NUCLEOTIDE SEQUENCE [LARGE SCALE GENOMIC DNA]</scope>
    <source>
        <strain>ATCC 23456 / CCUG 17765 / NCTC 10094 / 16M</strain>
    </source>
</reference>
<dbReference type="EMBL" id="AE008917">
    <property type="protein sequence ID" value="AAL51968.1"/>
    <property type="status" value="ALT_INIT"/>
    <property type="molecule type" value="Genomic_DNA"/>
</dbReference>
<dbReference type="PIR" id="AE3350">
    <property type="entry name" value="AE3350"/>
</dbReference>
<dbReference type="RefSeq" id="WP_002964332.1">
    <property type="nucleotide sequence ID" value="NZ_GG703780.1"/>
</dbReference>
<dbReference type="SMR" id="P65975"/>
<dbReference type="GeneID" id="97533554"/>
<dbReference type="KEGG" id="bme:BMEI0787"/>
<dbReference type="KEGG" id="bmel:DK63_635"/>
<dbReference type="PATRIC" id="fig|224914.52.peg.664"/>
<dbReference type="eggNOG" id="COG0468">
    <property type="taxonomic scope" value="Bacteria"/>
</dbReference>
<dbReference type="Proteomes" id="UP000000419">
    <property type="component" value="Chromosome I"/>
</dbReference>
<dbReference type="GO" id="GO:0005829">
    <property type="term" value="C:cytosol"/>
    <property type="evidence" value="ECO:0007669"/>
    <property type="project" value="TreeGrafter"/>
</dbReference>
<dbReference type="GO" id="GO:0005524">
    <property type="term" value="F:ATP binding"/>
    <property type="evidence" value="ECO:0007669"/>
    <property type="project" value="UniProtKB-UniRule"/>
</dbReference>
<dbReference type="GO" id="GO:0016887">
    <property type="term" value="F:ATP hydrolysis activity"/>
    <property type="evidence" value="ECO:0007669"/>
    <property type="project" value="InterPro"/>
</dbReference>
<dbReference type="GO" id="GO:0140664">
    <property type="term" value="F:ATP-dependent DNA damage sensor activity"/>
    <property type="evidence" value="ECO:0007669"/>
    <property type="project" value="InterPro"/>
</dbReference>
<dbReference type="GO" id="GO:0003684">
    <property type="term" value="F:damaged DNA binding"/>
    <property type="evidence" value="ECO:0007669"/>
    <property type="project" value="UniProtKB-UniRule"/>
</dbReference>
<dbReference type="GO" id="GO:0003697">
    <property type="term" value="F:single-stranded DNA binding"/>
    <property type="evidence" value="ECO:0007669"/>
    <property type="project" value="UniProtKB-UniRule"/>
</dbReference>
<dbReference type="GO" id="GO:0006310">
    <property type="term" value="P:DNA recombination"/>
    <property type="evidence" value="ECO:0007669"/>
    <property type="project" value="UniProtKB-UniRule"/>
</dbReference>
<dbReference type="GO" id="GO:0006281">
    <property type="term" value="P:DNA repair"/>
    <property type="evidence" value="ECO:0007669"/>
    <property type="project" value="UniProtKB-UniRule"/>
</dbReference>
<dbReference type="GO" id="GO:0009432">
    <property type="term" value="P:SOS response"/>
    <property type="evidence" value="ECO:0007669"/>
    <property type="project" value="UniProtKB-UniRule"/>
</dbReference>
<dbReference type="CDD" id="cd00983">
    <property type="entry name" value="RecA"/>
    <property type="match status" value="1"/>
</dbReference>
<dbReference type="FunFam" id="3.40.50.300:FF:000087">
    <property type="entry name" value="Recombinase RecA"/>
    <property type="match status" value="1"/>
</dbReference>
<dbReference type="Gene3D" id="3.40.50.300">
    <property type="entry name" value="P-loop containing nucleotide triphosphate hydrolases"/>
    <property type="match status" value="1"/>
</dbReference>
<dbReference type="HAMAP" id="MF_00268">
    <property type="entry name" value="RecA"/>
    <property type="match status" value="1"/>
</dbReference>
<dbReference type="InterPro" id="IPR003593">
    <property type="entry name" value="AAA+_ATPase"/>
</dbReference>
<dbReference type="InterPro" id="IPR013765">
    <property type="entry name" value="DNA_recomb/repair_RecA"/>
</dbReference>
<dbReference type="InterPro" id="IPR020584">
    <property type="entry name" value="DNA_recomb/repair_RecA_CS"/>
</dbReference>
<dbReference type="InterPro" id="IPR027417">
    <property type="entry name" value="P-loop_NTPase"/>
</dbReference>
<dbReference type="InterPro" id="IPR049261">
    <property type="entry name" value="RecA-like_C"/>
</dbReference>
<dbReference type="InterPro" id="IPR049428">
    <property type="entry name" value="RecA-like_N"/>
</dbReference>
<dbReference type="InterPro" id="IPR020588">
    <property type="entry name" value="RecA_ATP-bd"/>
</dbReference>
<dbReference type="InterPro" id="IPR023400">
    <property type="entry name" value="RecA_C_sf"/>
</dbReference>
<dbReference type="InterPro" id="IPR020587">
    <property type="entry name" value="RecA_monomer-monomer_interface"/>
</dbReference>
<dbReference type="NCBIfam" id="TIGR02012">
    <property type="entry name" value="tigrfam_recA"/>
    <property type="match status" value="1"/>
</dbReference>
<dbReference type="PANTHER" id="PTHR45900:SF1">
    <property type="entry name" value="MITOCHONDRIAL DNA REPAIR PROTEIN RECA HOMOLOG-RELATED"/>
    <property type="match status" value="1"/>
</dbReference>
<dbReference type="PANTHER" id="PTHR45900">
    <property type="entry name" value="RECA"/>
    <property type="match status" value="1"/>
</dbReference>
<dbReference type="Pfam" id="PF00154">
    <property type="entry name" value="RecA"/>
    <property type="match status" value="1"/>
</dbReference>
<dbReference type="Pfam" id="PF21096">
    <property type="entry name" value="RecA_C"/>
    <property type="match status" value="1"/>
</dbReference>
<dbReference type="PRINTS" id="PR00142">
    <property type="entry name" value="RECA"/>
</dbReference>
<dbReference type="SMART" id="SM00382">
    <property type="entry name" value="AAA"/>
    <property type="match status" value="1"/>
</dbReference>
<dbReference type="SUPFAM" id="SSF52540">
    <property type="entry name" value="P-loop containing nucleoside triphosphate hydrolases"/>
    <property type="match status" value="1"/>
</dbReference>
<dbReference type="SUPFAM" id="SSF54752">
    <property type="entry name" value="RecA protein, C-terminal domain"/>
    <property type="match status" value="1"/>
</dbReference>
<dbReference type="PROSITE" id="PS00321">
    <property type="entry name" value="RECA_1"/>
    <property type="match status" value="1"/>
</dbReference>
<dbReference type="PROSITE" id="PS50162">
    <property type="entry name" value="RECA_2"/>
    <property type="match status" value="1"/>
</dbReference>
<dbReference type="PROSITE" id="PS50163">
    <property type="entry name" value="RECA_3"/>
    <property type="match status" value="1"/>
</dbReference>
<evidence type="ECO:0000255" key="1">
    <source>
        <dbReference type="HAMAP-Rule" id="MF_00268"/>
    </source>
</evidence>
<evidence type="ECO:0000305" key="2"/>